<comment type="function">
    <text evidence="1">Exhibits S-adenosyl-L-methionine-dependent methyltransferase activity.</text>
</comment>
<comment type="similarity">
    <text evidence="2">Belongs to the UPF0677 family.</text>
</comment>
<dbReference type="EC" id="2.1.1.-"/>
<dbReference type="EMBL" id="CP000656">
    <property type="protein sequence ID" value="ABP42663.1"/>
    <property type="molecule type" value="Genomic_DNA"/>
</dbReference>
<dbReference type="SMR" id="A4T2U3"/>
<dbReference type="STRING" id="350054.Mflv_0168"/>
<dbReference type="KEGG" id="mgi:Mflv_0168"/>
<dbReference type="eggNOG" id="COG3315">
    <property type="taxonomic scope" value="Bacteria"/>
</dbReference>
<dbReference type="HOGENOM" id="CLU_056160_2_1_11"/>
<dbReference type="OrthoDB" id="9806164at2"/>
<dbReference type="GO" id="GO:0008168">
    <property type="term" value="F:methyltransferase activity"/>
    <property type="evidence" value="ECO:0007669"/>
    <property type="project" value="UniProtKB-KW"/>
</dbReference>
<dbReference type="GO" id="GO:0032259">
    <property type="term" value="P:methylation"/>
    <property type="evidence" value="ECO:0007669"/>
    <property type="project" value="UniProtKB-KW"/>
</dbReference>
<dbReference type="Gene3D" id="3.40.50.150">
    <property type="entry name" value="Vaccinia Virus protein VP39"/>
    <property type="match status" value="1"/>
</dbReference>
<dbReference type="InterPro" id="IPR007213">
    <property type="entry name" value="Ppm1/Ppm2/Tcmp"/>
</dbReference>
<dbReference type="InterPro" id="IPR029063">
    <property type="entry name" value="SAM-dependent_MTases_sf"/>
</dbReference>
<dbReference type="InterPro" id="IPR011610">
    <property type="entry name" value="SAM_mthyl_Trfase_ML2640-like"/>
</dbReference>
<dbReference type="NCBIfam" id="TIGR00027">
    <property type="entry name" value="mthyl_TIGR00027"/>
    <property type="match status" value="1"/>
</dbReference>
<dbReference type="PANTHER" id="PTHR43619">
    <property type="entry name" value="S-ADENOSYL-L-METHIONINE-DEPENDENT METHYLTRANSFERASE YKTD-RELATED"/>
    <property type="match status" value="1"/>
</dbReference>
<dbReference type="PANTHER" id="PTHR43619:SF2">
    <property type="entry name" value="S-ADENOSYL-L-METHIONINE-DEPENDENT METHYLTRANSFERASES SUPERFAMILY PROTEIN"/>
    <property type="match status" value="1"/>
</dbReference>
<dbReference type="Pfam" id="PF04072">
    <property type="entry name" value="LCM"/>
    <property type="match status" value="1"/>
</dbReference>
<dbReference type="SUPFAM" id="SSF53335">
    <property type="entry name" value="S-adenosyl-L-methionine-dependent methyltransferases"/>
    <property type="match status" value="1"/>
</dbReference>
<name>Y168_MYCGI</name>
<evidence type="ECO:0000250" key="1"/>
<evidence type="ECO:0000305" key="2"/>
<reference key="1">
    <citation type="submission" date="2007-04" db="EMBL/GenBank/DDBJ databases">
        <title>Complete sequence of chromosome of Mycobacterium gilvum PYR-GCK.</title>
        <authorList>
            <consortium name="US DOE Joint Genome Institute"/>
            <person name="Copeland A."/>
            <person name="Lucas S."/>
            <person name="Lapidus A."/>
            <person name="Barry K."/>
            <person name="Detter J.C."/>
            <person name="Glavina del Rio T."/>
            <person name="Hammon N."/>
            <person name="Israni S."/>
            <person name="Dalin E."/>
            <person name="Tice H."/>
            <person name="Pitluck S."/>
            <person name="Chain P."/>
            <person name="Malfatti S."/>
            <person name="Shin M."/>
            <person name="Vergez L."/>
            <person name="Schmutz J."/>
            <person name="Larimer F."/>
            <person name="Land M."/>
            <person name="Hauser L."/>
            <person name="Kyrpides N."/>
            <person name="Mikhailova N."/>
            <person name="Miller C."/>
            <person name="Richardson P."/>
        </authorList>
    </citation>
    <scope>NUCLEOTIDE SEQUENCE [LARGE SCALE GENOMIC DNA]</scope>
    <source>
        <strain>PYR-GCK</strain>
    </source>
</reference>
<accession>A4T2U3</accession>
<feature type="chain" id="PRO_0000361154" description="Putative S-adenosyl-L-methionine-dependent methyltransferase Mflv_0168">
    <location>
        <begin position="1"/>
        <end position="246"/>
    </location>
</feature>
<feature type="binding site" evidence="1">
    <location>
        <position position="112"/>
    </location>
    <ligand>
        <name>S-adenosyl-L-methionine</name>
        <dbReference type="ChEBI" id="CHEBI:59789"/>
    </ligand>
</feature>
<feature type="binding site" evidence="1">
    <location>
        <begin position="141"/>
        <end position="142"/>
    </location>
    <ligand>
        <name>S-adenosyl-L-methionine</name>
        <dbReference type="ChEBI" id="CHEBI:59789"/>
    </ligand>
</feature>
<organism>
    <name type="scientific">Mycolicibacterium gilvum (strain PYR-GCK)</name>
    <name type="common">Mycobacterium gilvum (strain PYR-GCK)</name>
    <dbReference type="NCBI Taxonomy" id="350054"/>
    <lineage>
        <taxon>Bacteria</taxon>
        <taxon>Bacillati</taxon>
        <taxon>Actinomycetota</taxon>
        <taxon>Actinomycetes</taxon>
        <taxon>Mycobacteriales</taxon>
        <taxon>Mycobacteriaceae</taxon>
        <taxon>Mycolicibacterium</taxon>
    </lineage>
</organism>
<keyword id="KW-0489">Methyltransferase</keyword>
<keyword id="KW-0949">S-adenosyl-L-methionine</keyword>
<keyword id="KW-0808">Transferase</keyword>
<protein>
    <recommendedName>
        <fullName>Putative S-adenosyl-L-methionine-dependent methyltransferase Mflv_0168</fullName>
        <ecNumber>2.1.1.-</ecNumber>
    </recommendedName>
</protein>
<proteinExistence type="inferred from homology"/>
<gene>
    <name type="ordered locus">Mflv_0168</name>
</gene>
<sequence>MTILDSPGAPDTGIDALALGTAVARVRETSSDQPLFTDRYSQMLVDAAGPMEPDQAALAVPGYVAARTKWFDDFFLAASAAGLAQIVLLSPGLDTRAWRLPWLNDTVIFEVDRPRTLAFKQQTLTRAGVTPTATYVPVPVDLGDDWPRALTAAGFSHGEPTAWAAEGLYADLPEAEQDNLLERIDLYSARGSRIAMDVDADGPDVVCWLCARHWEMGSTDAPDVMARYHRDAAGAPSGVFVEGRKL</sequence>